<keyword id="KW-0027">Amidation</keyword>
<keyword id="KW-0903">Direct protein sequencing</keyword>
<keyword id="KW-0527">Neuropeptide</keyword>
<keyword id="KW-0964">Secreted</keyword>
<feature type="peptide" id="PRO_0000419712" description="Allatostatin-A2">
    <location>
        <begin position="1"/>
        <end position="8"/>
    </location>
</feature>
<feature type="modified residue" description="Leucine amide" evidence="4 5">
    <location>
        <position position="8"/>
    </location>
</feature>
<feature type="unsure residue" description="L or I" evidence="5">
    <location>
        <position position="8"/>
    </location>
</feature>
<name>ALLA2_DELRA</name>
<organism>
    <name type="scientific">Delia radicum</name>
    <name type="common">Cabbage root fly</name>
    <name type="synonym">Anthomyia brassicae</name>
    <dbReference type="NCBI Taxonomy" id="30064"/>
    <lineage>
        <taxon>Eukaryota</taxon>
        <taxon>Metazoa</taxon>
        <taxon>Ecdysozoa</taxon>
        <taxon>Arthropoda</taxon>
        <taxon>Hexapoda</taxon>
        <taxon>Insecta</taxon>
        <taxon>Pterygota</taxon>
        <taxon>Neoptera</taxon>
        <taxon>Endopterygota</taxon>
        <taxon>Diptera</taxon>
        <taxon>Brachycera</taxon>
        <taxon>Muscomorpha</taxon>
        <taxon>Muscoidea</taxon>
        <taxon>Anthomyiidae</taxon>
        <taxon>Anthomyiinae</taxon>
        <taxon>Delia</taxon>
    </lineage>
</organism>
<protein>
    <recommendedName>
        <fullName>Allatostatin-A2</fullName>
        <shortName>AST-A2</shortName>
    </recommendedName>
    <alternativeName>
        <fullName>NRPYSFGL-amide</fullName>
    </alternativeName>
</protein>
<evidence type="ECO:0000250" key="1">
    <source>
        <dbReference type="UniProtKB" id="O44314"/>
    </source>
</evidence>
<evidence type="ECO:0000250" key="2">
    <source>
        <dbReference type="UniProtKB" id="P82155"/>
    </source>
</evidence>
<evidence type="ECO:0000255" key="3"/>
<evidence type="ECO:0000269" key="4">
    <source>
    </source>
</evidence>
<evidence type="ECO:0000269" key="5">
    <source>
    </source>
</evidence>
<evidence type="ECO:0000305" key="6"/>
<dbReference type="GO" id="GO:0005576">
    <property type="term" value="C:extracellular region"/>
    <property type="evidence" value="ECO:0007669"/>
    <property type="project" value="UniProtKB-SubCell"/>
</dbReference>
<dbReference type="GO" id="GO:0007218">
    <property type="term" value="P:neuropeptide signaling pathway"/>
    <property type="evidence" value="ECO:0007669"/>
    <property type="project" value="UniProtKB-KW"/>
</dbReference>
<reference evidence="6" key="1">
    <citation type="journal article" date="2011" name="Peptides">
        <title>Neuropeptides associated with the central nervous system of the cabbage root fly, Delia radicum (L).</title>
        <authorList>
            <person name="Audsley N."/>
            <person name="Matthews H.J."/>
            <person name="Down R.E."/>
            <person name="Weaver R.J."/>
        </authorList>
    </citation>
    <scope>PROTEIN SEQUENCE</scope>
    <scope>TISSUE SPECIFICITY</scope>
    <scope>MASS SPECTROMETRY</scope>
    <scope>AMIDATION AT LEU-8</scope>
    <source>
        <tissue evidence="4">Abdominal ganglion</tissue>
        <tissue evidence="4">Brain</tissue>
        <tissue evidence="4">Corpora allata</tissue>
        <tissue evidence="4">Corpora cardiaca</tissue>
    </source>
</reference>
<reference evidence="6" key="2">
    <citation type="journal article" date="2012" name="PLoS ONE">
        <title>Peptidomics of the agriculturally damaging larval stage of the cabbage root fly Delia radicum (Diptera: Anthomyiidae).</title>
        <authorList>
            <person name="Zoephel J."/>
            <person name="Reiher W."/>
            <person name="Rexer K.-H."/>
            <person name="Kahnt J."/>
            <person name="Wegener C."/>
        </authorList>
    </citation>
    <scope>PROTEIN SEQUENCE</scope>
    <scope>TISSUE SPECIFICITY</scope>
    <scope>DEVELOPMENTAL STAGE</scope>
    <scope>MASS SPECTROMETRY</scope>
    <scope>AMIDATION AT LEU-8</scope>
    <source>
        <tissue evidence="5">CNS</tissue>
        <tissue evidence="5">Midgut</tissue>
    </source>
</reference>
<comment type="function">
    <text evidence="1">May act as a neurotransmitter or neuromodulator.</text>
</comment>
<comment type="subcellular location">
    <subcellularLocation>
        <location evidence="2">Secreted</location>
    </subcellularLocation>
</comment>
<comment type="tissue specificity">
    <text evidence="4 5">In larvae, expressed in the CNS and midgut but not in the ring gland, thoracic perisymapthetic organs (tPSO) or abdominal perisymapthetic organs (aPSO) (at protein level). In adults, expressed in brain and thoracic-abdominal ganglion but not in corpora cardiaca and corpora allata (at protein level).</text>
</comment>
<comment type="developmental stage">
    <text evidence="4 5">Detected in larvae and adults.</text>
</comment>
<comment type="mass spectrometry" mass="952.5" method="MALDI" evidence="4 5"/>
<comment type="mass spectrometry" mass="952.49" method="MALDI" evidence="4 5"/>
<comment type="similarity">
    <text evidence="3">Belongs to the allatostatin family.</text>
</comment>
<sequence length="8" mass="953">NRPYSFGL</sequence>
<accession>B3EWJ3</accession>
<proteinExistence type="evidence at protein level"/>